<evidence type="ECO:0000255" key="1">
    <source>
        <dbReference type="HAMAP-Rule" id="MF_01805"/>
    </source>
</evidence>
<evidence type="ECO:0000256" key="2">
    <source>
        <dbReference type="SAM" id="MobiDB-lite"/>
    </source>
</evidence>
<evidence type="ECO:0000269" key="3">
    <source>
    </source>
</evidence>
<evidence type="ECO:0000303" key="4">
    <source>
    </source>
</evidence>
<evidence type="ECO:0000305" key="5">
    <source>
    </source>
</evidence>
<evidence type="ECO:0000305" key="6">
    <source>
    </source>
</evidence>
<evidence type="ECO:0000312" key="7">
    <source>
        <dbReference type="EMBL" id="ABF92600.1"/>
    </source>
</evidence>
<sequence>MSEDRRSPTDEAPREGELPRSPGDNFRIALPNFEGPLDLLLHLIKEHRVDIFDIPLALITEKYLEHLERMREINLDIAGEFLVMASTLAHLKSRMLLPRQDVASAQEGAEVLAVAEETEDPRAELVRRLLEYQKYKDAAEQLATQDLLGRDVFARNVPVEAVPIPEEEVGLQEFSVLKLVEALDRVLERLQPKLQHEVVRERVTLSEAILRVVERLRPHGQVLFESLFTEEETPSRQEVVITFLAILEMVKRRLIRVVQDEPLGPILLLPNGDALEKLAPTEVDDSDYR</sequence>
<gene>
    <name evidence="1 4" type="primary">scpA</name>
    <name evidence="7" type="ordered locus">MXAN_3841</name>
</gene>
<proteinExistence type="evidence at protein level"/>
<accession>Q1D5Q0</accession>
<name>SCPA_MYXXD</name>
<organism>
    <name type="scientific">Myxococcus xanthus (strain DK1622)</name>
    <dbReference type="NCBI Taxonomy" id="246197"/>
    <lineage>
        <taxon>Bacteria</taxon>
        <taxon>Pseudomonadati</taxon>
        <taxon>Myxococcota</taxon>
        <taxon>Myxococcia</taxon>
        <taxon>Myxococcales</taxon>
        <taxon>Cystobacterineae</taxon>
        <taxon>Myxococcaceae</taxon>
        <taxon>Myxococcus</taxon>
    </lineage>
</organism>
<dbReference type="EMBL" id="CP000113">
    <property type="protein sequence ID" value="ABF92600.1"/>
    <property type="molecule type" value="Genomic_DNA"/>
</dbReference>
<dbReference type="RefSeq" id="WP_011553853.1">
    <property type="nucleotide sequence ID" value="NC_008095.1"/>
</dbReference>
<dbReference type="SMR" id="Q1D5Q0"/>
<dbReference type="STRING" id="246197.MXAN_3841"/>
<dbReference type="EnsemblBacteria" id="ABF92600">
    <property type="protein sequence ID" value="ABF92600"/>
    <property type="gene ID" value="MXAN_3841"/>
</dbReference>
<dbReference type="GeneID" id="41361174"/>
<dbReference type="KEGG" id="mxa:MXAN_3841"/>
<dbReference type="eggNOG" id="COG1354">
    <property type="taxonomic scope" value="Bacteria"/>
</dbReference>
<dbReference type="HOGENOM" id="CLU_038686_3_2_7"/>
<dbReference type="OrthoDB" id="9811016at2"/>
<dbReference type="Proteomes" id="UP000002402">
    <property type="component" value="Chromosome"/>
</dbReference>
<dbReference type="GO" id="GO:0005737">
    <property type="term" value="C:cytoplasm"/>
    <property type="evidence" value="ECO:0007669"/>
    <property type="project" value="UniProtKB-SubCell"/>
</dbReference>
<dbReference type="GO" id="GO:0051301">
    <property type="term" value="P:cell division"/>
    <property type="evidence" value="ECO:0007669"/>
    <property type="project" value="UniProtKB-KW"/>
</dbReference>
<dbReference type="GO" id="GO:0007059">
    <property type="term" value="P:chromosome segregation"/>
    <property type="evidence" value="ECO:0007669"/>
    <property type="project" value="UniProtKB-UniRule"/>
</dbReference>
<dbReference type="GO" id="GO:0006260">
    <property type="term" value="P:DNA replication"/>
    <property type="evidence" value="ECO:0007669"/>
    <property type="project" value="UniProtKB-UniRule"/>
</dbReference>
<dbReference type="Gene3D" id="6.10.250.2410">
    <property type="match status" value="1"/>
</dbReference>
<dbReference type="Gene3D" id="1.10.10.580">
    <property type="entry name" value="Structural maintenance of chromosome 1. Chain E"/>
    <property type="match status" value="1"/>
</dbReference>
<dbReference type="HAMAP" id="MF_01805">
    <property type="entry name" value="ScpA"/>
    <property type="match status" value="1"/>
</dbReference>
<dbReference type="InterPro" id="IPR003768">
    <property type="entry name" value="ScpA"/>
</dbReference>
<dbReference type="InterPro" id="IPR023093">
    <property type="entry name" value="ScpA-like_C"/>
</dbReference>
<dbReference type="PANTHER" id="PTHR33969">
    <property type="entry name" value="SEGREGATION AND CONDENSATION PROTEIN A"/>
    <property type="match status" value="1"/>
</dbReference>
<dbReference type="PANTHER" id="PTHR33969:SF2">
    <property type="entry name" value="SEGREGATION AND CONDENSATION PROTEIN A"/>
    <property type="match status" value="1"/>
</dbReference>
<dbReference type="Pfam" id="PF02616">
    <property type="entry name" value="SMC_ScpA"/>
    <property type="match status" value="1"/>
</dbReference>
<reference evidence="7" key="1">
    <citation type="journal article" date="2006" name="Proc. Natl. Acad. Sci. U.S.A.">
        <title>Evolution of sensory complexity recorded in a myxobacterial genome.</title>
        <authorList>
            <person name="Goldman B.S."/>
            <person name="Nierman W.C."/>
            <person name="Kaiser D."/>
            <person name="Slater S.C."/>
            <person name="Durkin A.S."/>
            <person name="Eisen J.A."/>
            <person name="Ronning C.M."/>
            <person name="Barbazuk W.B."/>
            <person name="Blanchard M."/>
            <person name="Field C."/>
            <person name="Halling C."/>
            <person name="Hinkle G."/>
            <person name="Iartchuk O."/>
            <person name="Kim H.S."/>
            <person name="Mackenzie C."/>
            <person name="Madupu R."/>
            <person name="Miller N."/>
            <person name="Shvartsbeyn A."/>
            <person name="Sullivan S.A."/>
            <person name="Vaudin M."/>
            <person name="Wiegand R."/>
            <person name="Kaplan H.B."/>
        </authorList>
    </citation>
    <scope>NUCLEOTIDE SEQUENCE [LARGE SCALE GENOMIC DNA]</scope>
    <scope>INDUCTION</scope>
    <source>
        <strain>DK1622</strain>
    </source>
</reference>
<reference key="2">
    <citation type="journal article" date="2020" name="Mol. Microbiol.">
        <title>SMC and the bactofilin/PadC scaffold have distinct yet redundant functions in chromosome segregation and organization in Myxococcus xanthus.</title>
        <authorList>
            <person name="Anand D."/>
            <person name="Schumacher D."/>
            <person name="Soegaard-Andersen L."/>
        </authorList>
    </citation>
    <scope>FUNCTION</scope>
    <scope>PROBABLE SUBUNIT</scope>
    <scope>INDUCTION</scope>
    <scope>DISRUPTION PHENOTYPE</scope>
    <source>
        <strain>DK1622</strain>
    </source>
</reference>
<keyword id="KW-0131">Cell cycle</keyword>
<keyword id="KW-0132">Cell division</keyword>
<keyword id="KW-0159">Chromosome partition</keyword>
<keyword id="KW-0963">Cytoplasm</keyword>
<keyword id="KW-1185">Reference proteome</keyword>
<protein>
    <recommendedName>
        <fullName evidence="1 4">Segregation and condensation protein A</fullName>
    </recommendedName>
</protein>
<feature type="chain" id="PRO_0000460333" description="Segregation and condensation protein A">
    <location>
        <begin position="1"/>
        <end position="289"/>
    </location>
</feature>
<feature type="region of interest" description="Disordered" evidence="2">
    <location>
        <begin position="1"/>
        <end position="24"/>
    </location>
</feature>
<feature type="compositionally biased region" description="Basic and acidic residues" evidence="2">
    <location>
        <begin position="1"/>
        <end position="18"/>
    </location>
</feature>
<comment type="function">
    <text evidence="1 3">A conditionally essential component of the chromosome segregation machinery (PubMed:32738827). Participates in chromosomal partition during cell division (PubMed:32738827). Important for positioning of ParB-parS complexes (ori of replication) and of the ter replication site, as well as for segration of the ParB-parS complex and thus chromosome segregation (PubMed:32738827). May act via the formation of a condensin-like complex containing Smc, ScpA and ScpB that pulls DNA away from mid-cell into both cell halves (By similarity).</text>
</comment>
<comment type="subunit">
    <text evidence="1 6">Component of the Structural Maintenance of Chromosome (SMC) condensin-like complex composed of ScpA, ScpB and the Smc homodimer (Probable) (PubMed:32738827). ScpA and ScpB bind to the head domain of Smc. The presence of the three proteins is required for the association of the complex with DNA.</text>
</comment>
<comment type="subcellular location">
    <subcellularLocation>
        <location evidence="1 6">Cytoplasm</location>
    </subcellularLocation>
    <text evidence="1">Associated with two foci at the outer edges of the nucleoid region in young cells, and at four foci within both cell halves in older cells.</text>
</comment>
<comment type="induction">
    <text evidence="5 6">The 3' end of scpA overlaps with the 5' end of scpB, indicating the genes are cotranscribed (PubMed:17015832, PubMed:32738827).</text>
</comment>
<comment type="disruption phenotype">
    <text evidence="3">Conditionally essential, the primary defect in a double scpA-scpB in-frame deletion mutant is in chromosome segregation and organization. Cells are temperature-sensitive; they grow slower than wild-type at 25 and very poorly at 32 degrees Celsius (PubMed:32738827). Increased sensitivity to DNA gyrase inhibitor novobiocin, cells are longer, and contain 2 fully replicated chromosomes that are not completely segregated (PubMed:32738827). ParA, PadC and bactofilin BacP are less organized than in wild-type (PubMed:32738827). All these phenotypes are stronger at 32 degrees Celsius (PubMed:32738827). The double scpAB deletion is synthetically lethal with padC or triple bacNOP deletions (PubMed:32738827).</text>
</comment>
<comment type="similarity">
    <text evidence="1">Belongs to the ScpA family.</text>
</comment>